<keyword id="KW-0145">Chemotaxis</keyword>
<keyword id="KW-0164">Citrullination</keyword>
<keyword id="KW-0202">Cytokine</keyword>
<keyword id="KW-1015">Disulfide bond</keyword>
<keyword id="KW-0395">Inflammatory response</keyword>
<keyword id="KW-1185">Reference proteome</keyword>
<keyword id="KW-0964">Secreted</keyword>
<keyword id="KW-0732">Signal</keyword>
<dbReference type="EMBL" id="AF158598">
    <property type="protein sequence ID" value="AAD40323.1"/>
    <property type="molecule type" value="mRNA"/>
</dbReference>
<dbReference type="RefSeq" id="NP_001009281.1">
    <property type="nucleotide sequence ID" value="NM_001009281.1"/>
</dbReference>
<dbReference type="SMR" id="Q9XSX5"/>
<dbReference type="FunCoup" id="Q9XSX5">
    <property type="interactions" value="103"/>
</dbReference>
<dbReference type="STRING" id="9685.ENSFCAP00000004310"/>
<dbReference type="PaxDb" id="9685-ENSFCAP00000004310"/>
<dbReference type="Ensembl" id="ENSFCAT00000004666.5">
    <property type="protein sequence ID" value="ENSFCAP00000004310.3"/>
    <property type="gene ID" value="ENSFCAG00000004666.5"/>
</dbReference>
<dbReference type="GeneID" id="493836"/>
<dbReference type="KEGG" id="fca:493836"/>
<dbReference type="CTD" id="3576"/>
<dbReference type="VGNC" id="VGNC:67785">
    <property type="gene designation" value="CXCL8"/>
</dbReference>
<dbReference type="eggNOG" id="ENOG502S7MM">
    <property type="taxonomic scope" value="Eukaryota"/>
</dbReference>
<dbReference type="GeneTree" id="ENSGT00940000160757"/>
<dbReference type="HOGENOM" id="CLU_143902_3_0_1"/>
<dbReference type="InParanoid" id="Q9XSX5"/>
<dbReference type="OMA" id="IGTELRC"/>
<dbReference type="OrthoDB" id="9937393at2759"/>
<dbReference type="TreeFam" id="TF333433"/>
<dbReference type="Proteomes" id="UP000011712">
    <property type="component" value="Chromosome B1"/>
</dbReference>
<dbReference type="Bgee" id="ENSFCAG00000004666">
    <property type="expression patterns" value="Expressed in zone of skin and 8 other cell types or tissues"/>
</dbReference>
<dbReference type="GO" id="GO:0005615">
    <property type="term" value="C:extracellular space"/>
    <property type="evidence" value="ECO:0000318"/>
    <property type="project" value="GO_Central"/>
</dbReference>
<dbReference type="GO" id="GO:0008009">
    <property type="term" value="F:chemokine activity"/>
    <property type="evidence" value="ECO:0000318"/>
    <property type="project" value="GO_Central"/>
</dbReference>
<dbReference type="GO" id="GO:0045236">
    <property type="term" value="F:CXCR chemokine receptor binding"/>
    <property type="evidence" value="ECO:0000318"/>
    <property type="project" value="GO_Central"/>
</dbReference>
<dbReference type="GO" id="GO:0008201">
    <property type="term" value="F:heparin binding"/>
    <property type="evidence" value="ECO:0000250"/>
    <property type="project" value="UniProtKB"/>
</dbReference>
<dbReference type="GO" id="GO:0061844">
    <property type="term" value="P:antimicrobial humoral immune response mediated by antimicrobial peptide"/>
    <property type="evidence" value="ECO:0000318"/>
    <property type="project" value="GO_Central"/>
</dbReference>
<dbReference type="GO" id="GO:0071222">
    <property type="term" value="P:cellular response to lipopolysaccharide"/>
    <property type="evidence" value="ECO:0000318"/>
    <property type="project" value="GO_Central"/>
</dbReference>
<dbReference type="GO" id="GO:0006954">
    <property type="term" value="P:inflammatory response"/>
    <property type="evidence" value="ECO:0000318"/>
    <property type="project" value="GO_Central"/>
</dbReference>
<dbReference type="GO" id="GO:0030593">
    <property type="term" value="P:neutrophil chemotaxis"/>
    <property type="evidence" value="ECO:0000250"/>
    <property type="project" value="UniProtKB"/>
</dbReference>
<dbReference type="CDD" id="cd00273">
    <property type="entry name" value="Chemokine_CXC"/>
    <property type="match status" value="1"/>
</dbReference>
<dbReference type="FunFam" id="2.40.50.40:FF:000004">
    <property type="entry name" value="C-X-C motif chemokine"/>
    <property type="match status" value="1"/>
</dbReference>
<dbReference type="Gene3D" id="2.40.50.40">
    <property type="match status" value="1"/>
</dbReference>
<dbReference type="InterPro" id="IPR039809">
    <property type="entry name" value="Chemokine_b/g/d"/>
</dbReference>
<dbReference type="InterPro" id="IPR001089">
    <property type="entry name" value="Chemokine_CXC"/>
</dbReference>
<dbReference type="InterPro" id="IPR018048">
    <property type="entry name" value="Chemokine_CXC_CS"/>
</dbReference>
<dbReference type="InterPro" id="IPR001811">
    <property type="entry name" value="Chemokine_IL8-like_dom"/>
</dbReference>
<dbReference type="InterPro" id="IPR033899">
    <property type="entry name" value="CXC_Chemokine_domain"/>
</dbReference>
<dbReference type="InterPro" id="IPR036048">
    <property type="entry name" value="Interleukin_8-like_sf"/>
</dbReference>
<dbReference type="PANTHER" id="PTHR12015:SF200">
    <property type="entry name" value="INTERLEUKIN-8"/>
    <property type="match status" value="1"/>
</dbReference>
<dbReference type="PANTHER" id="PTHR12015">
    <property type="entry name" value="SMALL INDUCIBLE CYTOKINE A"/>
    <property type="match status" value="1"/>
</dbReference>
<dbReference type="Pfam" id="PF00048">
    <property type="entry name" value="IL8"/>
    <property type="match status" value="1"/>
</dbReference>
<dbReference type="PRINTS" id="PR00436">
    <property type="entry name" value="INTERLEUKIN8"/>
</dbReference>
<dbReference type="PRINTS" id="PR00437">
    <property type="entry name" value="SMALLCYTKCXC"/>
</dbReference>
<dbReference type="SMART" id="SM00199">
    <property type="entry name" value="SCY"/>
    <property type="match status" value="1"/>
</dbReference>
<dbReference type="SUPFAM" id="SSF54117">
    <property type="entry name" value="Interleukin 8-like chemokines"/>
    <property type="match status" value="1"/>
</dbReference>
<dbReference type="PROSITE" id="PS00471">
    <property type="entry name" value="SMALL_CYTOKINES_CXC"/>
    <property type="match status" value="1"/>
</dbReference>
<accession>Q9XSX5</accession>
<proteinExistence type="inferred from homology"/>
<gene>
    <name type="primary">CXCL8</name>
    <name type="synonym">IL8</name>
</gene>
<evidence type="ECO:0000250" key="1"/>
<evidence type="ECO:0000250" key="2">
    <source>
        <dbReference type="UniProtKB" id="P10145"/>
    </source>
</evidence>
<evidence type="ECO:0000305" key="3"/>
<reference key="1">
    <citation type="submission" date="1999-06" db="EMBL/GenBank/DDBJ databases">
        <title>Feline interleukin-8 mRNA.</title>
        <authorList>
            <person name="Straubinger A.F."/>
            <person name="Simpson K.W."/>
            <person name="Straubinger R.K."/>
        </authorList>
    </citation>
    <scope>NUCLEOTIDE SEQUENCE [MRNA]</scope>
</reference>
<feature type="signal peptide" evidence="1">
    <location>
        <begin position="1"/>
        <end position="22"/>
    </location>
</feature>
<feature type="chain" id="PRO_0000005124" description="Interleukin-8">
    <location>
        <begin position="23"/>
        <end position="101"/>
    </location>
</feature>
<feature type="modified residue" description="Citrulline" evidence="1">
    <location>
        <position position="27"/>
    </location>
</feature>
<feature type="disulfide bond" evidence="1">
    <location>
        <begin position="34"/>
        <end position="61"/>
    </location>
</feature>
<feature type="disulfide bond" evidence="1">
    <location>
        <begin position="36"/>
        <end position="77"/>
    </location>
</feature>
<organism>
    <name type="scientific">Felis catus</name>
    <name type="common">Cat</name>
    <name type="synonym">Felis silvestris catus</name>
    <dbReference type="NCBI Taxonomy" id="9685"/>
    <lineage>
        <taxon>Eukaryota</taxon>
        <taxon>Metazoa</taxon>
        <taxon>Chordata</taxon>
        <taxon>Craniata</taxon>
        <taxon>Vertebrata</taxon>
        <taxon>Euteleostomi</taxon>
        <taxon>Mammalia</taxon>
        <taxon>Eutheria</taxon>
        <taxon>Laurasiatheria</taxon>
        <taxon>Carnivora</taxon>
        <taxon>Feliformia</taxon>
        <taxon>Felidae</taxon>
        <taxon>Felinae</taxon>
        <taxon>Felis</taxon>
    </lineage>
</organism>
<sequence length="101" mass="11165">MTSKLVVALLAAFMLSAALCEAAVLSRISSELRCQCIKTHSTPFNPKLIKELTVIDSGPHCENSEIIVKLVNGKEVCLDPKQKWVQKVVEIFLKKAEKQNA</sequence>
<comment type="function">
    <text evidence="2">Chemotactic factor that mediates inflammatory response by attracting neutrophils, basophils, and T-cells to clear pathogens and protect the host from infection. Also plays an important role in neutrophil activation. Released in response to an inflammatory stimulus, exerts its effect by binding to the G-protein-coupled receptors CXCR1 and CXCR2, primarily found in neutrophils, monocytes and endothelial cells. G-protein heterotrimer (alpha, beta, gamma subunits) constitutively binds to CXCR1/CXCR2 receptor and activation by IL8 leads to beta and gamma subunits release from Galpha (GNAI2 in neutrophils) and activation of several downstream signaling pathways including PI3K and MAPK pathways.</text>
</comment>
<comment type="subunit">
    <text evidence="2">Homodimer. Interacts with TNFAIP6 (via Link domain); this interaction interferes with chemokine binding to glycosaminoglycans.</text>
</comment>
<comment type="subcellular location">
    <subcellularLocation>
        <location>Secreted</location>
    </subcellularLocation>
</comment>
<comment type="PTM">
    <text evidence="1">Citrullination at Arg-27 prevents proteolysis, and dampens tissue inflammation, it also enhances leukocytosis, possibly through impaired chemokine clearance from the blood circulation.</text>
</comment>
<comment type="similarity">
    <text evidence="3">Belongs to the intercrine alpha (chemokine CxC) family.</text>
</comment>
<name>IL8_FELCA</name>
<protein>
    <recommendedName>
        <fullName>Interleukin-8</fullName>
        <shortName>IL-8</shortName>
    </recommendedName>
    <alternativeName>
        <fullName>C-X-C motif chemokine 8</fullName>
    </alternativeName>
    <alternativeName>
        <fullName>Chemokine (C-X-C motif) ligand 8</fullName>
    </alternativeName>
</protein>